<organism>
    <name type="scientific">Loxosceles intermedia</name>
    <name type="common">Brown spider</name>
    <dbReference type="NCBI Taxonomy" id="58218"/>
    <lineage>
        <taxon>Eukaryota</taxon>
        <taxon>Metazoa</taxon>
        <taxon>Ecdysozoa</taxon>
        <taxon>Arthropoda</taxon>
        <taxon>Chelicerata</taxon>
        <taxon>Arachnida</taxon>
        <taxon>Araneae</taxon>
        <taxon>Araneomorphae</taxon>
        <taxon>Haplogynae</taxon>
        <taxon>Scytodoidea</taxon>
        <taxon>Sicariidae</taxon>
        <taxon>Loxosceles</taxon>
    </lineage>
</organism>
<name>TX32_LOXIN</name>
<keyword id="KW-0027">Amidation</keyword>
<keyword id="KW-1015">Disulfide bond</keyword>
<keyword id="KW-0872">Ion channel impairing toxin</keyword>
<keyword id="KW-0960">Knottin</keyword>
<keyword id="KW-0528">Neurotoxin</keyword>
<keyword id="KW-0964">Secreted</keyword>
<keyword id="KW-0732">Signal</keyword>
<keyword id="KW-0800">Toxin</keyword>
<keyword id="KW-0738">Voltage-gated sodium channel impairing toxin</keyword>
<feature type="signal peptide" evidence="2">
    <location>
        <begin position="1"/>
        <end position="20"/>
    </location>
</feature>
<feature type="propeptide" id="PRO_0000425846" evidence="1">
    <location>
        <begin position="21"/>
        <end position="33"/>
    </location>
</feature>
<feature type="chain" id="PRO_0000425847" description="U2-sicaritoxin-Li1b">
    <location>
        <begin position="34"/>
        <end position="85"/>
    </location>
</feature>
<feature type="modified residue" description="Lysine amide" evidence="1">
    <location>
        <position position="85"/>
    </location>
</feature>
<feature type="disulfide bond" evidence="1">
    <location>
        <begin position="35"/>
        <end position="53"/>
    </location>
</feature>
<feature type="disulfide bond" evidence="1">
    <location>
        <begin position="42"/>
        <end position="62"/>
    </location>
</feature>
<feature type="disulfide bond" evidence="1">
    <location>
        <begin position="52"/>
        <end position="71"/>
    </location>
</feature>
<feature type="disulfide bond" evidence="1">
    <location>
        <begin position="64"/>
        <end position="69"/>
    </location>
</feature>
<dbReference type="GO" id="GO:0005576">
    <property type="term" value="C:extracellular region"/>
    <property type="evidence" value="ECO:0007669"/>
    <property type="project" value="UniProtKB-SubCell"/>
</dbReference>
<dbReference type="GO" id="GO:0017080">
    <property type="term" value="F:sodium channel regulator activity"/>
    <property type="evidence" value="ECO:0007669"/>
    <property type="project" value="UniProtKB-KW"/>
</dbReference>
<dbReference type="GO" id="GO:0090729">
    <property type="term" value="F:toxin activity"/>
    <property type="evidence" value="ECO:0007669"/>
    <property type="project" value="UniProtKB-KW"/>
</dbReference>
<protein>
    <recommendedName>
        <fullName>U2-sicaritoxin-Li1b</fullName>
        <shortName>U2-SCRTX-Li1b</shortName>
    </recommendedName>
</protein>
<comment type="function">
    <text evidence="1">Toxin active against S.frugiperda larvae. May act on sodium channels (Nav) (By similarity).</text>
</comment>
<comment type="subcellular location">
    <subcellularLocation>
        <location evidence="1">Secreted</location>
    </subcellularLocation>
</comment>
<comment type="tissue specificity">
    <text>Expressed by the venom gland.</text>
</comment>
<comment type="domain">
    <text evidence="1">The presence of a 'disulfide through disulfide knot' structurally defines this protein as a knottin.</text>
</comment>
<comment type="similarity">
    <text evidence="3">Belongs to the neurotoxin 39 family.</text>
</comment>
<evidence type="ECO:0000250" key="1"/>
<evidence type="ECO:0000255" key="2"/>
<evidence type="ECO:0000305" key="3"/>
<sequence length="86" mass="9348">MKIELFLVVIFALAIHMATAEEVIESDIEPAERGCIKSGQRCGSPHGLPSNCCDDWKYKGRCGCTMGVCTCGKNCPSRGCDYRTKG</sequence>
<accession>P0DMD8</accession>
<proteinExistence type="evidence at transcript level"/>
<reference key="1">
    <citation type="journal article" date="2013" name="Toxicon">
        <title>A novel ICK peptide from the Loxosceles intermedia (brown spider) venom gland: cloning, heterologous expression and immunological cross-reactivity approaches.</title>
        <authorList>
            <person name="Matsubara F.H."/>
            <person name="Gremski L.H."/>
            <person name="Meissner G.O."/>
            <person name="Constantino Lopes E.S."/>
            <person name="Gremski W."/>
            <person name="Senff-Ribeiro A."/>
            <person name="Chaim O.M."/>
            <person name="Veiga S.S."/>
        </authorList>
    </citation>
    <scope>NUCLEOTIDE SEQUENCE [MRNA]</scope>
    <source>
        <tissue>Venom gland</tissue>
    </source>
</reference>